<feature type="chain" id="PRO_0000390658" description="Mitochondrial-processing peptidase subunit beta">
    <location>
        <begin position="1"/>
        <end position="469"/>
    </location>
</feature>
<feature type="active site" description="Proton acceptor" evidence="3">
    <location>
        <position position="81"/>
    </location>
</feature>
<feature type="binding site" evidence="3">
    <location>
        <position position="78"/>
    </location>
    <ligand>
        <name>Zn(2+)</name>
        <dbReference type="ChEBI" id="CHEBI:29105"/>
    </ligand>
</feature>
<feature type="binding site" evidence="3">
    <location>
        <position position="82"/>
    </location>
    <ligand>
        <name>Zn(2+)</name>
        <dbReference type="ChEBI" id="CHEBI:29105"/>
    </ligand>
</feature>
<feature type="binding site" evidence="1">
    <location>
        <position position="159"/>
    </location>
    <ligand>
        <name>Zn(2+)</name>
        <dbReference type="ChEBI" id="CHEBI:29105"/>
    </ligand>
</feature>
<keyword id="KW-0378">Hydrolase</keyword>
<keyword id="KW-0472">Membrane</keyword>
<keyword id="KW-0479">Metal-binding</keyword>
<keyword id="KW-0482">Metalloprotease</keyword>
<keyword id="KW-0496">Mitochondrion</keyword>
<keyword id="KW-0999">Mitochondrion inner membrane</keyword>
<keyword id="KW-0560">Oxidoreductase</keyword>
<keyword id="KW-0645">Protease</keyword>
<keyword id="KW-1185">Reference proteome</keyword>
<keyword id="KW-0862">Zinc</keyword>
<dbReference type="EC" id="3.4.24.64" evidence="1"/>
<dbReference type="EMBL" id="AB213514">
    <property type="protein sequence ID" value="BAD98567.1"/>
    <property type="molecule type" value="mRNA"/>
</dbReference>
<dbReference type="EMBL" id="AAFI02000125">
    <property type="protein sequence ID" value="EAS66835.1"/>
    <property type="molecule type" value="Genomic_DNA"/>
</dbReference>
<dbReference type="RefSeq" id="XP_001134518.1">
    <property type="nucleotide sequence ID" value="XM_001134518.1"/>
</dbReference>
<dbReference type="SMR" id="Q4W6B5"/>
<dbReference type="FunCoup" id="Q4W6B5">
    <property type="interactions" value="877"/>
</dbReference>
<dbReference type="STRING" id="44689.Q4W6B5"/>
<dbReference type="MEROPS" id="M16.003"/>
<dbReference type="PaxDb" id="44689-DDB0231799"/>
<dbReference type="EnsemblProtists" id="EAS66835">
    <property type="protein sequence ID" value="EAS66835"/>
    <property type="gene ID" value="DDB_G0288777"/>
</dbReference>
<dbReference type="GeneID" id="8626796"/>
<dbReference type="KEGG" id="ddi:DDB_G0288777"/>
<dbReference type="dictyBase" id="DDB_G0288777">
    <property type="gene designation" value="mppB"/>
</dbReference>
<dbReference type="VEuPathDB" id="AmoebaDB:DDB_G0288777"/>
<dbReference type="eggNOG" id="KOG0960">
    <property type="taxonomic scope" value="Eukaryota"/>
</dbReference>
<dbReference type="HOGENOM" id="CLU_009902_4_2_1"/>
<dbReference type="InParanoid" id="Q4W6B5"/>
<dbReference type="OMA" id="IDVVCDM"/>
<dbReference type="PhylomeDB" id="Q4W6B5"/>
<dbReference type="Reactome" id="R-DDI-611105">
    <property type="pathway name" value="Respiratory electron transport"/>
</dbReference>
<dbReference type="PRO" id="PR:Q4W6B5"/>
<dbReference type="Proteomes" id="UP000002195">
    <property type="component" value="Chromosome 5"/>
</dbReference>
<dbReference type="GO" id="GO:0005743">
    <property type="term" value="C:mitochondrial inner membrane"/>
    <property type="evidence" value="ECO:0007669"/>
    <property type="project" value="UniProtKB-SubCell"/>
</dbReference>
<dbReference type="GO" id="GO:0005759">
    <property type="term" value="C:mitochondrial matrix"/>
    <property type="evidence" value="ECO:0000314"/>
    <property type="project" value="dictyBase"/>
</dbReference>
<dbReference type="GO" id="GO:0031966">
    <property type="term" value="C:mitochondrial membrane"/>
    <property type="evidence" value="ECO:0000314"/>
    <property type="project" value="dictyBase"/>
</dbReference>
<dbReference type="GO" id="GO:0017087">
    <property type="term" value="C:mitochondrial processing peptidase complex"/>
    <property type="evidence" value="ECO:0000250"/>
    <property type="project" value="dictyBase"/>
</dbReference>
<dbReference type="GO" id="GO:0005739">
    <property type="term" value="C:mitochondrion"/>
    <property type="evidence" value="ECO:0000318"/>
    <property type="project" value="GO_Central"/>
</dbReference>
<dbReference type="GO" id="GO:0031982">
    <property type="term" value="C:vesicle"/>
    <property type="evidence" value="ECO:0000314"/>
    <property type="project" value="dictyBase"/>
</dbReference>
<dbReference type="GO" id="GO:0046872">
    <property type="term" value="F:metal ion binding"/>
    <property type="evidence" value="ECO:0007669"/>
    <property type="project" value="UniProtKB-KW"/>
</dbReference>
<dbReference type="GO" id="GO:0004222">
    <property type="term" value="F:metalloendopeptidase activity"/>
    <property type="evidence" value="ECO:0000250"/>
    <property type="project" value="dictyBase"/>
</dbReference>
<dbReference type="GO" id="GO:0016491">
    <property type="term" value="F:oxidoreductase activity"/>
    <property type="evidence" value="ECO:0007669"/>
    <property type="project" value="UniProtKB-KW"/>
</dbReference>
<dbReference type="GO" id="GO:0031930">
    <property type="term" value="P:mitochondria-nucleus signaling pathway"/>
    <property type="evidence" value="ECO:0000315"/>
    <property type="project" value="dictyBase"/>
</dbReference>
<dbReference type="GO" id="GO:0006627">
    <property type="term" value="P:protein processing involved in protein targeting to mitochondrion"/>
    <property type="evidence" value="ECO:0000250"/>
    <property type="project" value="dictyBase"/>
</dbReference>
<dbReference type="FunFam" id="3.30.830.10:FF:000236">
    <property type="entry name" value="Mitochondrial-processing peptidase subunit beta"/>
    <property type="match status" value="1"/>
</dbReference>
<dbReference type="FunFam" id="3.30.830.10:FF:000001">
    <property type="entry name" value="Mitochondrial-processing peptidase subunit beta, mitochondrial"/>
    <property type="match status" value="1"/>
</dbReference>
<dbReference type="Gene3D" id="3.30.830.10">
    <property type="entry name" value="Metalloenzyme, LuxS/M16 peptidase-like"/>
    <property type="match status" value="2"/>
</dbReference>
<dbReference type="InterPro" id="IPR011249">
    <property type="entry name" value="Metalloenz_LuxS/M16"/>
</dbReference>
<dbReference type="InterPro" id="IPR050361">
    <property type="entry name" value="MPP/UQCRC_Complex"/>
</dbReference>
<dbReference type="InterPro" id="IPR011765">
    <property type="entry name" value="Pept_M16_N"/>
</dbReference>
<dbReference type="InterPro" id="IPR001431">
    <property type="entry name" value="Pept_M16_Zn_BS"/>
</dbReference>
<dbReference type="InterPro" id="IPR007863">
    <property type="entry name" value="Peptidase_M16_C"/>
</dbReference>
<dbReference type="PANTHER" id="PTHR11851:SF149">
    <property type="entry name" value="GH01077P"/>
    <property type="match status" value="1"/>
</dbReference>
<dbReference type="PANTHER" id="PTHR11851">
    <property type="entry name" value="METALLOPROTEASE"/>
    <property type="match status" value="1"/>
</dbReference>
<dbReference type="Pfam" id="PF00675">
    <property type="entry name" value="Peptidase_M16"/>
    <property type="match status" value="1"/>
</dbReference>
<dbReference type="Pfam" id="PF05193">
    <property type="entry name" value="Peptidase_M16_C"/>
    <property type="match status" value="1"/>
</dbReference>
<dbReference type="SUPFAM" id="SSF63411">
    <property type="entry name" value="LuxS/MPP-like metallohydrolase"/>
    <property type="match status" value="2"/>
</dbReference>
<dbReference type="PROSITE" id="PS00143">
    <property type="entry name" value="INSULINASE"/>
    <property type="match status" value="1"/>
</dbReference>
<gene>
    <name type="primary">mppB</name>
    <name type="ORF">DDB_G0288777</name>
</gene>
<evidence type="ECO:0000250" key="1">
    <source>
        <dbReference type="UniProtKB" id="P10507"/>
    </source>
</evidence>
<evidence type="ECO:0000250" key="2">
    <source>
        <dbReference type="UniProtKB" id="Q03346"/>
    </source>
</evidence>
<evidence type="ECO:0000255" key="3">
    <source>
        <dbReference type="PROSITE-ProRule" id="PRU10096"/>
    </source>
</evidence>
<evidence type="ECO:0000269" key="4">
    <source>
    </source>
</evidence>
<evidence type="ECO:0000269" key="5">
    <source>
    </source>
</evidence>
<evidence type="ECO:0000305" key="6"/>
<evidence type="ECO:0000305" key="7">
    <source>
    </source>
</evidence>
<accession>Q4W6B5</accession>
<accession>Q1ZXD0</accession>
<proteinExistence type="evidence at protein level"/>
<comment type="function">
    <text evidence="2 5 7">Catalytic subunit of the essential mitochondrial processing protease (MPP), which cleaves the mitochondrial sequence off newly imported precursors proteins (Probable). Preferentially, cleaves after an arginine at position P2 (By similarity). Plays an essential role in mitochondrial biogenesis (PubMed:18603769).</text>
</comment>
<comment type="catalytic activity">
    <reaction evidence="1">
        <text>Release of N-terminal transit peptides from precursor proteins imported into the mitochondrion, typically with Arg in position P2.</text>
        <dbReference type="EC" id="3.4.24.64"/>
    </reaction>
</comment>
<comment type="cofactor">
    <cofactor evidence="1">
        <name>Zn(2+)</name>
        <dbReference type="ChEBI" id="CHEBI:29105"/>
    </cofactor>
    <text evidence="1">Binds 1 zinc ion per subunit.</text>
</comment>
<comment type="activity regulation">
    <text evidence="1">Binding to alpha subunit is required for catalytic activity.</text>
</comment>
<comment type="subunit">
    <text evidence="1 6">Heterodimer of alpha and beta subunits, forming the mitochondrial processing protease (MPP) in which subunit alpha is involved in substrate recognition and binding and subunit beta is the catalytic subunit (By similarity). mppB is probably also part of the cytochrome bc1 complex as a core I protein in the mitochondrial inner membrane (Probable).</text>
</comment>
<comment type="subcellular location">
    <subcellularLocation>
        <location evidence="5">Mitochondrion inner membrane</location>
    </subcellularLocation>
    <subcellularLocation>
        <location evidence="5">Mitochondrion matrix</location>
    </subcellularLocation>
</comment>
<comment type="developmental stage">
    <text evidence="5">The expression level of the transcript is highest in vegetative cells and in early development (5 hours), and decreases at 5 to 10 hours of development. Inn contrast the protein level does not significantly change during the life cycle, despite the marked reduction in the level of mRNA after 5 to 10 hours of development, suggesting that the protein is stable throughout the life cycle.</text>
</comment>
<comment type="induction">
    <text evidence="4 5">Antisense RNA inhibition of the mppB gene induces gene expression of nuclear-encoded mitochondrial proteins (mppA and cxdA) and surprisingly also of the mppB gene itself. These results suggest that antisense RNA inhibition of mppB induces gene expression of mitochondrial proteins, presumably in a retrograde signaling manner. Up-regulated by Pseudomonas aeruginosa, PAO1 strain and PA14 strain infection.</text>
</comment>
<comment type="disruption phenotype">
    <text evidence="5">Disruption of the mppB is lethal.</text>
</comment>
<comment type="similarity">
    <text evidence="6">Belongs to the peptidase M16 family.</text>
</comment>
<reference key="1">
    <citation type="journal article" date="2008" name="Biosci. Biotechnol. Biochem.">
        <title>Antisense RNA inhibition of the beta subunit of the Dictyostelium discoideum mitochondrial processing peptidase induces the expression of mitochondrial proteins.</title>
        <authorList>
            <person name="Nagayama K."/>
            <person name="Itono S."/>
            <person name="Yoshida T."/>
            <person name="Ishiguro S."/>
            <person name="Ochiai H."/>
            <person name="Ohmachi T."/>
        </authorList>
    </citation>
    <scope>NUCLEOTIDE SEQUENCE [MRNA]</scope>
    <scope>FUNCTION</scope>
    <scope>SUBCELLULAR LOCATION</scope>
    <scope>DEVELOPMENTAL STAGE</scope>
    <scope>INDUCTION</scope>
    <scope>DISRUPTION PHENOTYPE</scope>
</reference>
<reference key="2">
    <citation type="journal article" date="2005" name="Nature">
        <title>The genome of the social amoeba Dictyostelium discoideum.</title>
        <authorList>
            <person name="Eichinger L."/>
            <person name="Pachebat J.A."/>
            <person name="Gloeckner G."/>
            <person name="Rajandream M.A."/>
            <person name="Sucgang R."/>
            <person name="Berriman M."/>
            <person name="Song J."/>
            <person name="Olsen R."/>
            <person name="Szafranski K."/>
            <person name="Xu Q."/>
            <person name="Tunggal B."/>
            <person name="Kummerfeld S."/>
            <person name="Madera M."/>
            <person name="Konfortov B.A."/>
            <person name="Rivero F."/>
            <person name="Bankier A.T."/>
            <person name="Lehmann R."/>
            <person name="Hamlin N."/>
            <person name="Davies R."/>
            <person name="Gaudet P."/>
            <person name="Fey P."/>
            <person name="Pilcher K."/>
            <person name="Chen G."/>
            <person name="Saunders D."/>
            <person name="Sodergren E.J."/>
            <person name="Davis P."/>
            <person name="Kerhornou A."/>
            <person name="Nie X."/>
            <person name="Hall N."/>
            <person name="Anjard C."/>
            <person name="Hemphill L."/>
            <person name="Bason N."/>
            <person name="Farbrother P."/>
            <person name="Desany B."/>
            <person name="Just E."/>
            <person name="Morio T."/>
            <person name="Rost R."/>
            <person name="Churcher C.M."/>
            <person name="Cooper J."/>
            <person name="Haydock S."/>
            <person name="van Driessche N."/>
            <person name="Cronin A."/>
            <person name="Goodhead I."/>
            <person name="Muzny D.M."/>
            <person name="Mourier T."/>
            <person name="Pain A."/>
            <person name="Lu M."/>
            <person name="Harper D."/>
            <person name="Lindsay R."/>
            <person name="Hauser H."/>
            <person name="James K.D."/>
            <person name="Quiles M."/>
            <person name="Madan Babu M."/>
            <person name="Saito T."/>
            <person name="Buchrieser C."/>
            <person name="Wardroper A."/>
            <person name="Felder M."/>
            <person name="Thangavelu M."/>
            <person name="Johnson D."/>
            <person name="Knights A."/>
            <person name="Loulseged H."/>
            <person name="Mungall K.L."/>
            <person name="Oliver K."/>
            <person name="Price C."/>
            <person name="Quail M.A."/>
            <person name="Urushihara H."/>
            <person name="Hernandez J."/>
            <person name="Rabbinowitsch E."/>
            <person name="Steffen D."/>
            <person name="Sanders M."/>
            <person name="Ma J."/>
            <person name="Kohara Y."/>
            <person name="Sharp S."/>
            <person name="Simmonds M.N."/>
            <person name="Spiegler S."/>
            <person name="Tivey A."/>
            <person name="Sugano S."/>
            <person name="White B."/>
            <person name="Walker D."/>
            <person name="Woodward J.R."/>
            <person name="Winckler T."/>
            <person name="Tanaka Y."/>
            <person name="Shaulsky G."/>
            <person name="Schleicher M."/>
            <person name="Weinstock G.M."/>
            <person name="Rosenthal A."/>
            <person name="Cox E.C."/>
            <person name="Chisholm R.L."/>
            <person name="Gibbs R.A."/>
            <person name="Loomis W.F."/>
            <person name="Platzer M."/>
            <person name="Kay R.R."/>
            <person name="Williams J.G."/>
            <person name="Dear P.H."/>
            <person name="Noegel A.A."/>
            <person name="Barrell B.G."/>
            <person name="Kuspa A."/>
        </authorList>
    </citation>
    <scope>NUCLEOTIDE SEQUENCE [LARGE SCALE GENOMIC DNA]</scope>
    <source>
        <strain>AX4</strain>
    </source>
</reference>
<reference key="3">
    <citation type="journal article" date="2006" name="Mol. Cell. Proteomics">
        <title>Proteomics fingerprinting of phagosome maturation and evidence for the role of a Galpha during uptake.</title>
        <authorList>
            <person name="Gotthardt D."/>
            <person name="Blancheteau V."/>
            <person name="Bosserhoff A."/>
            <person name="Ruppert T."/>
            <person name="Delorenzi M."/>
            <person name="Soldati T."/>
        </authorList>
    </citation>
    <scope>IDENTIFICATION BY MASS SPECTROMETRY [LARGE SCALE ANALYSIS]</scope>
    <source>
        <strain>AX2</strain>
    </source>
</reference>
<reference key="4">
    <citation type="journal article" date="2008" name="BMC Microbiol.">
        <title>Dictyostelium transcriptional responses to Pseudomonas aeruginosa: common and specific effects from PAO1 and PA14 strains.</title>
        <authorList>
            <person name="Carilla-Latorre S."/>
            <person name="Calvo-Garrido J."/>
            <person name="Bloomfield G."/>
            <person name="Skelton J."/>
            <person name="Kay R.R."/>
            <person name="Ivens A."/>
            <person name="Martinez J.L."/>
            <person name="Escalante R."/>
        </authorList>
    </citation>
    <scope>INDUCTION [LARGE SCALE ANALYSIS]</scope>
</reference>
<name>MPPB_DICDI</name>
<sequence>MSNITKLFVKSTKNFSRSFSRKTVDPSYLKISPETKITTLSNGIRVATEQTYGEVASVGVWVDSGSVYETDKNNGVAHFLEHMIFKGTAKRPTPQSIETEIENMGGSLNAFTSREHSAYYMKVLKDNVPNAVDILSDILQNSKFETSLIEQERDTILSENDYIQSKEDEVVFDQLHAAAFQGSALGRTILGPVENIKSITREQIQEFINENYTGDRLVISAAGAVNHEQLVEQVKEKFANVKMSQVSKDVKRAAITNDFIGSELRVRDDEQPLIHFAVAVRALPWTDPDYFVLELIQTMIGNWNRGIAAGKNIASNLGEIVATEDLAESYSTFFTCYQDTGLFGNYGVCQPERVDDLVAEMLKEWQRIATSCNKNEVERNKQKLLATTLMQYDGTSKVCEGIGRQILTLGRRLSPFEVYTRINEITVADVQRVASTLLRDVSPAVTAIGPIANYPDYNFVKGWTYWNRL</sequence>
<protein>
    <recommendedName>
        <fullName>Mitochondrial-processing peptidase subunit beta</fullName>
        <ecNumber evidence="1">3.4.24.64</ecNumber>
    </recommendedName>
    <alternativeName>
        <fullName>Beta-MPP</fullName>
    </alternativeName>
</protein>
<organism>
    <name type="scientific">Dictyostelium discoideum</name>
    <name type="common">Social amoeba</name>
    <dbReference type="NCBI Taxonomy" id="44689"/>
    <lineage>
        <taxon>Eukaryota</taxon>
        <taxon>Amoebozoa</taxon>
        <taxon>Evosea</taxon>
        <taxon>Eumycetozoa</taxon>
        <taxon>Dictyostelia</taxon>
        <taxon>Dictyosteliales</taxon>
        <taxon>Dictyosteliaceae</taxon>
        <taxon>Dictyostelium</taxon>
    </lineage>
</organism>